<evidence type="ECO:0000250" key="1"/>
<evidence type="ECO:0000305" key="2"/>
<sequence>MPVDTSQRLAKLRELMKERHVDVYLIPSEDSHQSEYIAPCDARRAFISGFTGSAGCAIVSMSKAALSTDGRYFNQAAKQLDENWLLLKRGMENVPTWQEWTAEQAEGGKVVGVDPSLITAAEARKLSDTIKDTGGSLVGVPDNLVDLVWGGDRPARPREKVMVHPIEFAGQSFEEKITDLRKELTKKKRAGMVISMLDEIAWLYNLRGADIPFNPVFFAYAIVTHSTAELFVDEAKLTQAVKEHLGDKVALRPYESIFESLKLLSQAAASNGDEGHQKFLLSDKASWSLNLALGGEEKVEEVRSPIADAKAVKNAVELEGTRACHIRDGAALTEYFAWLENELINKKTVLNEVNASDKLAQIRSKHKDFVGLSFDTISSTGPNAAIIHYRAERGNCPNIDPNAVYLCDSGAQYLDGTTDTTRTLHFGKPTEMEKKAYTLVLKGLISIDTAVFPKGTTGYAIDAFARQHLWRNGLDYLHGTGHGVGSYLNVHEGPMGIGTRVQYAETPITAGNVLSDEPGYYEDGNFGIRIENIVVAKEVKTPHKFGDKPWIGFEHVTMTPLCQNLMDTSLLTAEEKKWVNDYHTEVWEKTKGFFNNDELTRNWLKRETQPI</sequence>
<comment type="function">
    <text evidence="1">Catalyzes the removal of a penultimate prolyl residue from the N-termini of peptides.</text>
</comment>
<comment type="catalytic activity">
    <reaction>
        <text>Release of any N-terminal amino acid, including proline, that is linked to proline, even from a dipeptide or tripeptide.</text>
        <dbReference type="EC" id="3.4.11.9"/>
    </reaction>
</comment>
<comment type="cofactor">
    <cofactor evidence="1">
        <name>Mn(2+)</name>
        <dbReference type="ChEBI" id="CHEBI:29035"/>
    </cofactor>
    <text evidence="1">Binds 2 manganese ions per subunit.</text>
</comment>
<comment type="similarity">
    <text evidence="2">Belongs to the peptidase M24B family.</text>
</comment>
<feature type="chain" id="PRO_0000411788" description="Probable Xaa-Pro aminopeptidase P">
    <location>
        <begin position="1"/>
        <end position="611"/>
    </location>
</feature>
<feature type="binding site" evidence="1">
    <location>
        <position position="408"/>
    </location>
    <ligand>
        <name>Mn(2+)</name>
        <dbReference type="ChEBI" id="CHEBI:29035"/>
        <label>2</label>
    </ligand>
</feature>
<feature type="binding site" evidence="1">
    <location>
        <position position="419"/>
    </location>
    <ligand>
        <name>Mn(2+)</name>
        <dbReference type="ChEBI" id="CHEBI:29035"/>
        <label>1</label>
    </ligand>
</feature>
<feature type="binding site" evidence="1">
    <location>
        <position position="419"/>
    </location>
    <ligand>
        <name>Mn(2+)</name>
        <dbReference type="ChEBI" id="CHEBI:29035"/>
        <label>2</label>
    </ligand>
</feature>
<feature type="binding site" evidence="1">
    <location>
        <position position="517"/>
    </location>
    <ligand>
        <name>Mn(2+)</name>
        <dbReference type="ChEBI" id="CHEBI:29035"/>
        <label>1</label>
    </ligand>
</feature>
<feature type="binding site" evidence="1">
    <location>
        <position position="531"/>
    </location>
    <ligand>
        <name>Mn(2+)</name>
        <dbReference type="ChEBI" id="CHEBI:29035"/>
        <label>1</label>
    </ligand>
</feature>
<feature type="binding site" evidence="1">
    <location>
        <position position="531"/>
    </location>
    <ligand>
        <name>Mn(2+)</name>
        <dbReference type="ChEBI" id="CHEBI:29035"/>
        <label>2</label>
    </ligand>
</feature>
<organism>
    <name type="scientific">Coccidioides posadasii (strain RMSCC 757 / Silveira)</name>
    <name type="common">Valley fever fungus</name>
    <dbReference type="NCBI Taxonomy" id="443226"/>
    <lineage>
        <taxon>Eukaryota</taxon>
        <taxon>Fungi</taxon>
        <taxon>Dikarya</taxon>
        <taxon>Ascomycota</taxon>
        <taxon>Pezizomycotina</taxon>
        <taxon>Eurotiomycetes</taxon>
        <taxon>Eurotiomycetidae</taxon>
        <taxon>Onygenales</taxon>
        <taxon>Onygenaceae</taxon>
        <taxon>Coccidioides</taxon>
    </lineage>
</organism>
<gene>
    <name type="primary">AMPP</name>
    <name type="ORF">CPSG_00906</name>
</gene>
<accession>E9CTR7</accession>
<name>AMPP1_COCPS</name>
<reference key="1">
    <citation type="submission" date="2010-03" db="EMBL/GenBank/DDBJ databases">
        <title>The genome sequence of Coccidioides posadasii strain Silveira.</title>
        <authorList>
            <consortium name="The Broad Institute Genome Sequencing Center for Infectious Disease"/>
            <person name="Neafsey D."/>
            <person name="Orbach M."/>
            <person name="Henn M.R."/>
            <person name="Cole G.T."/>
            <person name="Galgiani J."/>
            <person name="Gardner M.J."/>
            <person name="Kirkland T.N."/>
            <person name="Taylor J.W."/>
            <person name="Young S.K."/>
            <person name="Zeng Q."/>
            <person name="Koehrsen M."/>
            <person name="Alvarado L."/>
            <person name="Berlin A."/>
            <person name="Borenstein D."/>
            <person name="Chapman S.B."/>
            <person name="Chen Z."/>
            <person name="Engels R."/>
            <person name="Freedman E."/>
            <person name="Gellesch M."/>
            <person name="Goldberg J."/>
            <person name="Griggs A."/>
            <person name="Gujja S."/>
            <person name="Heilman E."/>
            <person name="Heiman D."/>
            <person name="Howarth C."/>
            <person name="Jen D."/>
            <person name="Larson L."/>
            <person name="Mehta T."/>
            <person name="Neiman D."/>
            <person name="Park D."/>
            <person name="Pearson M."/>
            <person name="Richards J."/>
            <person name="Roberts A."/>
            <person name="Saif S."/>
            <person name="Shea T."/>
            <person name="Shenoy N."/>
            <person name="Sisk P."/>
            <person name="Stolte C."/>
            <person name="Sykes S."/>
            <person name="Walk T."/>
            <person name="White J."/>
            <person name="Yandava C."/>
            <person name="Haas B."/>
            <person name="Nusbaum C."/>
            <person name="Birren B."/>
        </authorList>
    </citation>
    <scope>NUCLEOTIDE SEQUENCE [LARGE SCALE GENOMIC DNA]</scope>
    <source>
        <strain>RMSCC 757 / Silveira</strain>
    </source>
</reference>
<dbReference type="EC" id="3.4.11.9"/>
<dbReference type="EMBL" id="GL636486">
    <property type="protein sequence ID" value="EFW23007.1"/>
    <property type="molecule type" value="Genomic_DNA"/>
</dbReference>
<dbReference type="SMR" id="E9CTR7"/>
<dbReference type="STRING" id="443226.E9CTR7"/>
<dbReference type="VEuPathDB" id="FungiDB:CPSG_00906"/>
<dbReference type="VEuPathDB" id="FungiDB:D8B26_006552"/>
<dbReference type="eggNOG" id="KOG2413">
    <property type="taxonomic scope" value="Eukaryota"/>
</dbReference>
<dbReference type="HOGENOM" id="CLU_011781_2_2_1"/>
<dbReference type="OMA" id="EPGMILS"/>
<dbReference type="OrthoDB" id="2480at33183"/>
<dbReference type="Proteomes" id="UP000002497">
    <property type="component" value="Unassembled WGS sequence"/>
</dbReference>
<dbReference type="GO" id="GO:0005737">
    <property type="term" value="C:cytoplasm"/>
    <property type="evidence" value="ECO:0007669"/>
    <property type="project" value="UniProtKB-ARBA"/>
</dbReference>
<dbReference type="GO" id="GO:0046872">
    <property type="term" value="F:metal ion binding"/>
    <property type="evidence" value="ECO:0007669"/>
    <property type="project" value="UniProtKB-KW"/>
</dbReference>
<dbReference type="GO" id="GO:0070006">
    <property type="term" value="F:metalloaminopeptidase activity"/>
    <property type="evidence" value="ECO:0007669"/>
    <property type="project" value="InterPro"/>
</dbReference>
<dbReference type="GO" id="GO:0006508">
    <property type="term" value="P:proteolysis"/>
    <property type="evidence" value="ECO:0007669"/>
    <property type="project" value="UniProtKB-KW"/>
</dbReference>
<dbReference type="CDD" id="cd01085">
    <property type="entry name" value="APP"/>
    <property type="match status" value="1"/>
</dbReference>
<dbReference type="FunFam" id="3.40.350.10:FF:000010">
    <property type="entry name" value="Probable Xaa-Pro aminopeptidase P"/>
    <property type="match status" value="1"/>
</dbReference>
<dbReference type="FunFam" id="3.90.230.10:FF:000007">
    <property type="entry name" value="Xaa-Pro aminopeptidase P"/>
    <property type="match status" value="1"/>
</dbReference>
<dbReference type="FunFam" id="3.40.350.10:FF:000003">
    <property type="entry name" value="Xaa-pro aminopeptidase P"/>
    <property type="match status" value="1"/>
</dbReference>
<dbReference type="Gene3D" id="3.90.230.10">
    <property type="entry name" value="Creatinase/methionine aminopeptidase superfamily"/>
    <property type="match status" value="1"/>
</dbReference>
<dbReference type="Gene3D" id="3.40.350.10">
    <property type="entry name" value="Creatinase/prolidase N-terminal domain"/>
    <property type="match status" value="2"/>
</dbReference>
<dbReference type="InterPro" id="IPR029149">
    <property type="entry name" value="Creatin/AminoP/Spt16_N"/>
</dbReference>
<dbReference type="InterPro" id="IPR036005">
    <property type="entry name" value="Creatinase/aminopeptidase-like"/>
</dbReference>
<dbReference type="InterPro" id="IPR000587">
    <property type="entry name" value="Creatinase_N"/>
</dbReference>
<dbReference type="InterPro" id="IPR000994">
    <property type="entry name" value="Pept_M24"/>
</dbReference>
<dbReference type="InterPro" id="IPR033740">
    <property type="entry name" value="Pept_M24B"/>
</dbReference>
<dbReference type="InterPro" id="IPR032416">
    <property type="entry name" value="Peptidase_M24_C"/>
</dbReference>
<dbReference type="InterPro" id="IPR001131">
    <property type="entry name" value="Peptidase_M24B_aminopep-P_CS"/>
</dbReference>
<dbReference type="InterPro" id="IPR050422">
    <property type="entry name" value="X-Pro_aminopeptidase_P"/>
</dbReference>
<dbReference type="PANTHER" id="PTHR43763">
    <property type="entry name" value="XAA-PRO AMINOPEPTIDASE 1"/>
    <property type="match status" value="1"/>
</dbReference>
<dbReference type="PANTHER" id="PTHR43763:SF6">
    <property type="entry name" value="XAA-PRO AMINOPEPTIDASE 1"/>
    <property type="match status" value="1"/>
</dbReference>
<dbReference type="Pfam" id="PF01321">
    <property type="entry name" value="Creatinase_N"/>
    <property type="match status" value="1"/>
</dbReference>
<dbReference type="Pfam" id="PF16189">
    <property type="entry name" value="Creatinase_N_2"/>
    <property type="match status" value="1"/>
</dbReference>
<dbReference type="Pfam" id="PF00557">
    <property type="entry name" value="Peptidase_M24"/>
    <property type="match status" value="1"/>
</dbReference>
<dbReference type="Pfam" id="PF16188">
    <property type="entry name" value="Peptidase_M24_C"/>
    <property type="match status" value="1"/>
</dbReference>
<dbReference type="SUPFAM" id="SSF55920">
    <property type="entry name" value="Creatinase/aminopeptidase"/>
    <property type="match status" value="1"/>
</dbReference>
<dbReference type="SUPFAM" id="SSF53092">
    <property type="entry name" value="Creatinase/prolidase N-terminal domain"/>
    <property type="match status" value="1"/>
</dbReference>
<dbReference type="PROSITE" id="PS00491">
    <property type="entry name" value="PROLINE_PEPTIDASE"/>
    <property type="match status" value="1"/>
</dbReference>
<proteinExistence type="inferred from homology"/>
<keyword id="KW-0031">Aminopeptidase</keyword>
<keyword id="KW-0378">Hydrolase</keyword>
<keyword id="KW-0464">Manganese</keyword>
<keyword id="KW-0479">Metal-binding</keyword>
<keyword id="KW-0482">Metalloprotease</keyword>
<keyword id="KW-0645">Protease</keyword>
<keyword id="KW-1185">Reference proteome</keyword>
<protein>
    <recommendedName>
        <fullName>Probable Xaa-Pro aminopeptidase P</fullName>
        <shortName>AMPP</shortName>
        <shortName>Aminopeptidase P</shortName>
        <ecNumber>3.4.11.9</ecNumber>
    </recommendedName>
    <alternativeName>
        <fullName>Aminoacylproline aminopeptidase</fullName>
    </alternativeName>
    <alternativeName>
        <fullName>Prolidase</fullName>
    </alternativeName>
</protein>